<protein>
    <recommendedName>
        <fullName evidence="1">UPF0246 protein ETA_07010</fullName>
    </recommendedName>
</protein>
<reference key="1">
    <citation type="journal article" date="2008" name="Environ. Microbiol.">
        <title>The genome of Erwinia tasmaniensis strain Et1/99, a non-pathogenic bacterium in the genus Erwinia.</title>
        <authorList>
            <person name="Kube M."/>
            <person name="Migdoll A.M."/>
            <person name="Mueller I."/>
            <person name="Kuhl H."/>
            <person name="Beck A."/>
            <person name="Reinhardt R."/>
            <person name="Geider K."/>
        </authorList>
    </citation>
    <scope>NUCLEOTIDE SEQUENCE [LARGE SCALE GENOMIC DNA]</scope>
    <source>
        <strain>DSM 17950 / CFBP 7177 / CIP 109463 / NCPPB 4357 / Et1/99</strain>
    </source>
</reference>
<comment type="similarity">
    <text evidence="1">Belongs to the UPF0246 family.</text>
</comment>
<dbReference type="EMBL" id="CU468135">
    <property type="protein sequence ID" value="CAO95747.1"/>
    <property type="molecule type" value="Genomic_DNA"/>
</dbReference>
<dbReference type="RefSeq" id="WP_012440449.1">
    <property type="nucleotide sequence ID" value="NC_010694.1"/>
</dbReference>
<dbReference type="SMR" id="B2VGR2"/>
<dbReference type="STRING" id="465817.ETA_07010"/>
<dbReference type="KEGG" id="eta:ETA_07010"/>
<dbReference type="eggNOG" id="COG3022">
    <property type="taxonomic scope" value="Bacteria"/>
</dbReference>
<dbReference type="HOGENOM" id="CLU_061989_0_0_6"/>
<dbReference type="OrthoDB" id="9777133at2"/>
<dbReference type="Proteomes" id="UP000001726">
    <property type="component" value="Chromosome"/>
</dbReference>
<dbReference type="GO" id="GO:0005829">
    <property type="term" value="C:cytosol"/>
    <property type="evidence" value="ECO:0007669"/>
    <property type="project" value="TreeGrafter"/>
</dbReference>
<dbReference type="GO" id="GO:0033194">
    <property type="term" value="P:response to hydroperoxide"/>
    <property type="evidence" value="ECO:0007669"/>
    <property type="project" value="TreeGrafter"/>
</dbReference>
<dbReference type="HAMAP" id="MF_00652">
    <property type="entry name" value="UPF0246"/>
    <property type="match status" value="1"/>
</dbReference>
<dbReference type="InterPro" id="IPR005583">
    <property type="entry name" value="YaaA"/>
</dbReference>
<dbReference type="NCBIfam" id="NF002541">
    <property type="entry name" value="PRK02101.1-1"/>
    <property type="match status" value="1"/>
</dbReference>
<dbReference type="NCBIfam" id="NF002542">
    <property type="entry name" value="PRK02101.1-3"/>
    <property type="match status" value="1"/>
</dbReference>
<dbReference type="PANTHER" id="PTHR30283:SF4">
    <property type="entry name" value="PEROXIDE STRESS RESISTANCE PROTEIN YAAA"/>
    <property type="match status" value="1"/>
</dbReference>
<dbReference type="PANTHER" id="PTHR30283">
    <property type="entry name" value="PEROXIDE STRESS RESPONSE PROTEIN YAAA"/>
    <property type="match status" value="1"/>
</dbReference>
<dbReference type="Pfam" id="PF03883">
    <property type="entry name" value="H2O2_YaaD"/>
    <property type="match status" value="1"/>
</dbReference>
<name>Y701_ERWT9</name>
<evidence type="ECO:0000255" key="1">
    <source>
        <dbReference type="HAMAP-Rule" id="MF_00652"/>
    </source>
</evidence>
<organism>
    <name type="scientific">Erwinia tasmaniensis (strain DSM 17950 / CFBP 7177 / CIP 109463 / NCPPB 4357 / Et1/99)</name>
    <dbReference type="NCBI Taxonomy" id="465817"/>
    <lineage>
        <taxon>Bacteria</taxon>
        <taxon>Pseudomonadati</taxon>
        <taxon>Pseudomonadota</taxon>
        <taxon>Gammaproteobacteria</taxon>
        <taxon>Enterobacterales</taxon>
        <taxon>Erwiniaceae</taxon>
        <taxon>Erwinia</taxon>
    </lineage>
</organism>
<gene>
    <name type="ordered locus">ETA_07010</name>
</gene>
<accession>B2VGR2</accession>
<proteinExistence type="inferred from homology"/>
<feature type="chain" id="PRO_1000131119" description="UPF0246 protein ETA_07010">
    <location>
        <begin position="1"/>
        <end position="258"/>
    </location>
</feature>
<sequence>MLMVISPAKTLDFASPLATERFTQPALLAESQKLINVARKLSPADIASLMHISDKLAVLNAERFNDWQPAFTPDNARQAILAFKGDVYTGLQAETFGEEDFTFAQQHLRMLSGLYGLLRPLDLMQAYRLEMGIKLANPAGKDLYSFWGDKLTTALNEALAQQGDNLLINLASDEYFRSVKPKRLEADIIKPVFLDEKNGKFKVISFYAKKARGLMCRYIIQNRLTKVEQLKKFDLDGYAFDGDTSSNNELVFKRREMA</sequence>
<keyword id="KW-1185">Reference proteome</keyword>